<protein>
    <recommendedName>
        <fullName>Forkhead box protein Q1</fullName>
    </recommendedName>
    <alternativeName>
        <fullName>HNF-3/forkhead-like protein 1</fullName>
        <shortName>HFH-1</shortName>
    </alternativeName>
    <alternativeName>
        <fullName>Hepatocyte nuclear factor 3 forkhead homolog 1</fullName>
    </alternativeName>
</protein>
<proteinExistence type="evidence at protein level"/>
<evidence type="ECO:0000250" key="1"/>
<evidence type="ECO:0000255" key="2">
    <source>
        <dbReference type="PROSITE-ProRule" id="PRU00089"/>
    </source>
</evidence>
<evidence type="ECO:0000256" key="3">
    <source>
        <dbReference type="SAM" id="MobiDB-lite"/>
    </source>
</evidence>
<evidence type="ECO:0000269" key="4">
    <source>
    </source>
</evidence>
<evidence type="ECO:0000269" key="5">
    <source>
    </source>
</evidence>
<evidence type="ECO:0000305" key="6"/>
<organism>
    <name type="scientific">Homo sapiens</name>
    <name type="common">Human</name>
    <dbReference type="NCBI Taxonomy" id="9606"/>
    <lineage>
        <taxon>Eukaryota</taxon>
        <taxon>Metazoa</taxon>
        <taxon>Chordata</taxon>
        <taxon>Craniata</taxon>
        <taxon>Vertebrata</taxon>
        <taxon>Euteleostomi</taxon>
        <taxon>Mammalia</taxon>
        <taxon>Eutheria</taxon>
        <taxon>Euarchontoglires</taxon>
        <taxon>Primates</taxon>
        <taxon>Haplorrhini</taxon>
        <taxon>Catarrhini</taxon>
        <taxon>Hominidae</taxon>
        <taxon>Homo</taxon>
    </lineage>
</organism>
<comment type="function">
    <text evidence="1">Plays a role in hair follicle differentiation.</text>
</comment>
<comment type="subcellular location">
    <subcellularLocation>
        <location evidence="2">Nucleus</location>
    </subcellularLocation>
</comment>
<comment type="tissue specificity">
    <text evidence="4">Expressed predominantly in the stomach, trachea, bladder and salivary gland.</text>
</comment>
<keyword id="KW-0238">DNA-binding</keyword>
<keyword id="KW-0539">Nucleus</keyword>
<keyword id="KW-1267">Proteomics identification</keyword>
<keyword id="KW-1185">Reference proteome</keyword>
<keyword id="KW-0804">Transcription</keyword>
<keyword id="KW-0805">Transcription regulation</keyword>
<name>FOXQ1_HUMAN</name>
<accession>Q9C009</accession>
<accession>Q9NS06</accession>
<gene>
    <name type="primary">FOXQ1</name>
    <name type="synonym">HFH1</name>
</gene>
<feature type="chain" id="PRO_0000091890" description="Forkhead box protein Q1">
    <location>
        <begin position="1"/>
        <end position="403"/>
    </location>
</feature>
<feature type="DNA-binding region" description="Fork-head" evidence="2">
    <location>
        <begin position="119"/>
        <end position="214"/>
    </location>
</feature>
<feature type="region of interest" description="Disordered" evidence="3">
    <location>
        <begin position="1"/>
        <end position="75"/>
    </location>
</feature>
<feature type="region of interest" description="Disordered" evidence="3">
    <location>
        <begin position="94"/>
        <end position="116"/>
    </location>
</feature>
<feature type="region of interest" description="Disordered" evidence="3">
    <location>
        <begin position="216"/>
        <end position="266"/>
    </location>
</feature>
<feature type="compositionally biased region" description="Low complexity" evidence="3">
    <location>
        <begin position="32"/>
        <end position="48"/>
    </location>
</feature>
<feature type="compositionally biased region" description="Gly residues" evidence="3">
    <location>
        <begin position="96"/>
        <end position="107"/>
    </location>
</feature>
<feature type="compositionally biased region" description="Pro residues" evidence="3">
    <location>
        <begin position="236"/>
        <end position="246"/>
    </location>
</feature>
<feature type="sequence variant" id="VAR_031606" description="In dbSNP:rs9502889." evidence="4 5">
    <original>T</original>
    <variation>P</variation>
    <location>
        <position position="60"/>
    </location>
</feature>
<feature type="sequence variant" id="VAR_031607" description="In dbSNP:rs9502890." evidence="4 5">
    <original>Q</original>
    <variation>P</variation>
    <location>
        <position position="61"/>
    </location>
</feature>
<feature type="sequence conflict" description="In Ref. 2; AAF75586." evidence="6" ref="2">
    <original>NSPA</original>
    <variation>KPS</variation>
    <location>
        <begin position="49"/>
        <end position="52"/>
    </location>
</feature>
<feature type="sequence conflict" description="In Ref. 2; AAF75586." evidence="6" ref="2">
    <original>S</original>
    <variation>L</variation>
    <location>
        <position position="386"/>
    </location>
</feature>
<feature type="sequence conflict" description="In Ref. 2; AAF75586." evidence="6" ref="2">
    <original>P</original>
    <variation>S</variation>
    <location>
        <position position="395"/>
    </location>
</feature>
<sequence length="403" mass="41526">MKLEVFVPRAAHGDKQGSDLEGAGGSDAPSPLSAAGDDSLGSDGDCAANSPAAGGGARDTQGDGEQSAGGGPGAEEAIPAAAAAAVVAEGAEAGAAGPGAGGAGSGEGARSKPYTRRPKPPYSYIALIAMAIRDSAGGRLTLAEINEYLMGKFPFFRGSYTGWRNSVRHNLSLNDCFVKVLRDPSRPWGKDNYWMLNPNSEYTFADGVFRRRRKRLSHRAPVPAPGLRPEEAPGLPAAPPPAPAAPASPRMRSPARQEERASPAGKFSSSFAIDSILRKPFRSRRLRDTAPGTTLQWGAAPCPPLPAFPALLPAAPCRALLPLCAYGAGEPARLGAREAEVPPTAPPLLLAPLPAAAPAKPLRGPAAGGAHLYCPLRLPAALQAASVRRPGPHLPYPVETLLA</sequence>
<dbReference type="EMBL" id="AF225950">
    <property type="protein sequence ID" value="AAK00639.1"/>
    <property type="molecule type" value="Genomic_DNA"/>
</dbReference>
<dbReference type="EMBL" id="AF153341">
    <property type="protein sequence ID" value="AAF75586.1"/>
    <property type="molecule type" value="Genomic_DNA"/>
</dbReference>
<dbReference type="EMBL" id="BC053850">
    <property type="protein sequence ID" value="AAH53850.1"/>
    <property type="molecule type" value="mRNA"/>
</dbReference>
<dbReference type="CCDS" id="CCDS4471.1"/>
<dbReference type="RefSeq" id="NP_150285.3">
    <property type="nucleotide sequence ID" value="NM_033260.3"/>
</dbReference>
<dbReference type="SMR" id="Q9C009"/>
<dbReference type="BioGRID" id="125147">
    <property type="interactions" value="138"/>
</dbReference>
<dbReference type="FunCoup" id="Q9C009">
    <property type="interactions" value="275"/>
</dbReference>
<dbReference type="IntAct" id="Q9C009">
    <property type="interactions" value="137"/>
</dbReference>
<dbReference type="MINT" id="Q9C009"/>
<dbReference type="STRING" id="9606.ENSP00000296839"/>
<dbReference type="GlyGen" id="Q9C009">
    <property type="glycosylation" value="1 site"/>
</dbReference>
<dbReference type="iPTMnet" id="Q9C009"/>
<dbReference type="PhosphoSitePlus" id="Q9C009"/>
<dbReference type="BioMuta" id="FOXQ1"/>
<dbReference type="DMDM" id="143811391"/>
<dbReference type="jPOST" id="Q9C009"/>
<dbReference type="MassIVE" id="Q9C009"/>
<dbReference type="PaxDb" id="9606-ENSP00000296839"/>
<dbReference type="PeptideAtlas" id="Q9C009"/>
<dbReference type="ProteomicsDB" id="79939"/>
<dbReference type="Antibodypedia" id="9198">
    <property type="antibodies" value="479 antibodies from 30 providers"/>
</dbReference>
<dbReference type="CPTC" id="Q9C009">
    <property type="antibodies" value="2 antibodies"/>
</dbReference>
<dbReference type="DNASU" id="94234"/>
<dbReference type="Ensembl" id="ENST00000296839.5">
    <property type="protein sequence ID" value="ENSP00000296839.2"/>
    <property type="gene ID" value="ENSG00000164379.7"/>
</dbReference>
<dbReference type="GeneID" id="94234"/>
<dbReference type="KEGG" id="hsa:94234"/>
<dbReference type="MANE-Select" id="ENST00000296839.5">
    <property type="protein sequence ID" value="ENSP00000296839.2"/>
    <property type="RefSeq nucleotide sequence ID" value="NM_033260.4"/>
    <property type="RefSeq protein sequence ID" value="NP_150285.3"/>
</dbReference>
<dbReference type="UCSC" id="uc003mtl.5">
    <property type="organism name" value="human"/>
</dbReference>
<dbReference type="AGR" id="HGNC:20951"/>
<dbReference type="CTD" id="94234"/>
<dbReference type="DisGeNET" id="94234"/>
<dbReference type="GeneCards" id="FOXQ1"/>
<dbReference type="HGNC" id="HGNC:20951">
    <property type="gene designation" value="FOXQ1"/>
</dbReference>
<dbReference type="HPA" id="ENSG00000164379">
    <property type="expression patterns" value="Tissue enhanced (stomach, urinary bladder)"/>
</dbReference>
<dbReference type="MIM" id="612788">
    <property type="type" value="gene"/>
</dbReference>
<dbReference type="neXtProt" id="NX_Q9C009"/>
<dbReference type="OpenTargets" id="ENSG00000164379"/>
<dbReference type="PharmGKB" id="PA134924898"/>
<dbReference type="VEuPathDB" id="HostDB:ENSG00000164379"/>
<dbReference type="eggNOG" id="KOG2294">
    <property type="taxonomic scope" value="Eukaryota"/>
</dbReference>
<dbReference type="GeneTree" id="ENSGT00940000162937"/>
<dbReference type="HOGENOM" id="CLU_055457_0_0_1"/>
<dbReference type="InParanoid" id="Q9C009"/>
<dbReference type="OMA" id="YLMGRFP"/>
<dbReference type="OrthoDB" id="5954824at2759"/>
<dbReference type="PAN-GO" id="Q9C009">
    <property type="GO annotations" value="5 GO annotations based on evolutionary models"/>
</dbReference>
<dbReference type="PhylomeDB" id="Q9C009"/>
<dbReference type="TreeFam" id="TF316127"/>
<dbReference type="PathwayCommons" id="Q9C009"/>
<dbReference type="SignaLink" id="Q9C009"/>
<dbReference type="SIGNOR" id="Q9C009"/>
<dbReference type="BioGRID-ORCS" id="94234">
    <property type="hits" value="22 hits in 1177 CRISPR screens"/>
</dbReference>
<dbReference type="ChiTaRS" id="FOXQ1">
    <property type="organism name" value="human"/>
</dbReference>
<dbReference type="GenomeRNAi" id="94234"/>
<dbReference type="Pharos" id="Q9C009">
    <property type="development level" value="Tbio"/>
</dbReference>
<dbReference type="PRO" id="PR:Q9C009"/>
<dbReference type="Proteomes" id="UP000005640">
    <property type="component" value="Chromosome 6"/>
</dbReference>
<dbReference type="RNAct" id="Q9C009">
    <property type="molecule type" value="protein"/>
</dbReference>
<dbReference type="Bgee" id="ENSG00000164379">
    <property type="expression patterns" value="Expressed in parotid gland and 152 other cell types or tissues"/>
</dbReference>
<dbReference type="GO" id="GO:0000785">
    <property type="term" value="C:chromatin"/>
    <property type="evidence" value="ECO:0000247"/>
    <property type="project" value="NTNU_SB"/>
</dbReference>
<dbReference type="GO" id="GO:0005634">
    <property type="term" value="C:nucleus"/>
    <property type="evidence" value="ECO:0007669"/>
    <property type="project" value="UniProtKB-SubCell"/>
</dbReference>
<dbReference type="GO" id="GO:0000981">
    <property type="term" value="F:DNA-binding transcription factor activity, RNA polymerase II-specific"/>
    <property type="evidence" value="ECO:0000247"/>
    <property type="project" value="NTNU_SB"/>
</dbReference>
<dbReference type="GO" id="GO:0001227">
    <property type="term" value="F:DNA-binding transcription repressor activity, RNA polymerase II-specific"/>
    <property type="evidence" value="ECO:0007669"/>
    <property type="project" value="Ensembl"/>
</dbReference>
<dbReference type="GO" id="GO:0000978">
    <property type="term" value="F:RNA polymerase II cis-regulatory region sequence-specific DNA binding"/>
    <property type="evidence" value="ECO:0000318"/>
    <property type="project" value="GO_Central"/>
</dbReference>
<dbReference type="GO" id="GO:1990837">
    <property type="term" value="F:sequence-specific double-stranded DNA binding"/>
    <property type="evidence" value="ECO:0000314"/>
    <property type="project" value="ARUK-UCL"/>
</dbReference>
<dbReference type="GO" id="GO:0009653">
    <property type="term" value="P:anatomical structure morphogenesis"/>
    <property type="evidence" value="ECO:0000318"/>
    <property type="project" value="GO_Central"/>
</dbReference>
<dbReference type="GO" id="GO:0030154">
    <property type="term" value="P:cell differentiation"/>
    <property type="evidence" value="ECO:0000318"/>
    <property type="project" value="GO_Central"/>
</dbReference>
<dbReference type="GO" id="GO:0031069">
    <property type="term" value="P:hair follicle morphogenesis"/>
    <property type="evidence" value="ECO:0007669"/>
    <property type="project" value="Ensembl"/>
</dbReference>
<dbReference type="GO" id="GO:0006357">
    <property type="term" value="P:regulation of transcription by RNA polymerase II"/>
    <property type="evidence" value="ECO:0000318"/>
    <property type="project" value="GO_Central"/>
</dbReference>
<dbReference type="CDD" id="cd20034">
    <property type="entry name" value="FH_FOXQ1-like"/>
    <property type="match status" value="1"/>
</dbReference>
<dbReference type="FunFam" id="1.10.10.10:FF:000071">
    <property type="entry name" value="Forkhead box F1"/>
    <property type="match status" value="1"/>
</dbReference>
<dbReference type="Gene3D" id="1.10.10.10">
    <property type="entry name" value="Winged helix-like DNA-binding domain superfamily/Winged helix DNA-binding domain"/>
    <property type="match status" value="1"/>
</dbReference>
<dbReference type="InterPro" id="IPR047518">
    <property type="entry name" value="FH_FOXQ1"/>
</dbReference>
<dbReference type="InterPro" id="IPR001766">
    <property type="entry name" value="Fork_head_dom"/>
</dbReference>
<dbReference type="InterPro" id="IPR050211">
    <property type="entry name" value="FOX_domain-containing"/>
</dbReference>
<dbReference type="InterPro" id="IPR018122">
    <property type="entry name" value="TF_fork_head_CS_1"/>
</dbReference>
<dbReference type="InterPro" id="IPR030456">
    <property type="entry name" value="TF_fork_head_CS_2"/>
</dbReference>
<dbReference type="InterPro" id="IPR036388">
    <property type="entry name" value="WH-like_DNA-bd_sf"/>
</dbReference>
<dbReference type="InterPro" id="IPR036390">
    <property type="entry name" value="WH_DNA-bd_sf"/>
</dbReference>
<dbReference type="PANTHER" id="PTHR11829">
    <property type="entry name" value="FORKHEAD BOX PROTEIN"/>
    <property type="match status" value="1"/>
</dbReference>
<dbReference type="PANTHER" id="PTHR11829:SF206">
    <property type="entry name" value="FORKHEAD BOX PROTEIN Q1"/>
    <property type="match status" value="1"/>
</dbReference>
<dbReference type="Pfam" id="PF00250">
    <property type="entry name" value="Forkhead"/>
    <property type="match status" value="1"/>
</dbReference>
<dbReference type="PRINTS" id="PR00053">
    <property type="entry name" value="FORKHEAD"/>
</dbReference>
<dbReference type="SMART" id="SM00339">
    <property type="entry name" value="FH"/>
    <property type="match status" value="1"/>
</dbReference>
<dbReference type="SUPFAM" id="SSF46785">
    <property type="entry name" value="Winged helix' DNA-binding domain"/>
    <property type="match status" value="1"/>
</dbReference>
<dbReference type="PROSITE" id="PS00657">
    <property type="entry name" value="FORK_HEAD_1"/>
    <property type="match status" value="1"/>
</dbReference>
<dbReference type="PROSITE" id="PS00658">
    <property type="entry name" value="FORK_HEAD_2"/>
    <property type="match status" value="1"/>
</dbReference>
<dbReference type="PROSITE" id="PS50039">
    <property type="entry name" value="FORK_HEAD_3"/>
    <property type="match status" value="1"/>
</dbReference>
<reference key="1">
    <citation type="journal article" date="2001" name="DNA Cell Biol.">
        <title>Isolation and characterization of the human forkhead gene FOXQ1.</title>
        <authorList>
            <person name="Bieller A."/>
            <person name="Pasche B."/>
            <person name="Frank S."/>
            <person name="Glaeser B."/>
            <person name="Kunz J."/>
            <person name="Witt K."/>
            <person name="Zoll B."/>
        </authorList>
    </citation>
    <scope>NUCLEOTIDE SEQUENCE [GENOMIC DNA]</scope>
    <scope>TISSUE SPECIFICITY</scope>
    <scope>VARIANTS PRO-60 AND PRO-61</scope>
</reference>
<reference key="2">
    <citation type="journal article" date="2001" name="Genesis">
        <title>The winged helix/forkhead transcription factor Foxq1 regulates differentiation of hair in satin mice.</title>
        <authorList>
            <person name="Hong H.-K."/>
            <person name="Noveroske J.K."/>
            <person name="Headon D.J."/>
            <person name="Liu T."/>
            <person name="Sy M.S."/>
            <person name="Justice M.J."/>
            <person name="Chakravarti A."/>
        </authorList>
    </citation>
    <scope>NUCLEOTIDE SEQUENCE [GENOMIC DNA]</scope>
</reference>
<reference key="3">
    <citation type="journal article" date="2004" name="Genome Res.">
        <title>The status, quality, and expansion of the NIH full-length cDNA project: the Mammalian Gene Collection (MGC).</title>
        <authorList>
            <consortium name="The MGC Project Team"/>
        </authorList>
    </citation>
    <scope>NUCLEOTIDE SEQUENCE [LARGE SCALE MRNA]</scope>
    <scope>VARIANTS PRO-60 AND PRO-61</scope>
    <source>
        <tissue>Lung</tissue>
    </source>
</reference>